<evidence type="ECO:0000255" key="1">
    <source>
        <dbReference type="HAMAP-Rule" id="MF_00570"/>
    </source>
</evidence>
<feature type="chain" id="PRO_1000025009" description="Nicotinate phosphoribosyltransferase">
    <location>
        <begin position="1"/>
        <end position="392"/>
    </location>
</feature>
<feature type="modified residue" description="Phosphohistidine; by autocatalysis" evidence="1">
    <location>
        <position position="216"/>
    </location>
</feature>
<protein>
    <recommendedName>
        <fullName evidence="1">Nicotinate phosphoribosyltransferase</fullName>
        <shortName evidence="1">NAPRTase</shortName>
        <ecNumber evidence="1">6.3.4.21</ecNumber>
    </recommendedName>
</protein>
<gene>
    <name evidence="1" type="primary">pncB</name>
    <name type="ordered locus">H16_A2589</name>
</gene>
<keyword id="KW-0436">Ligase</keyword>
<keyword id="KW-0597">Phosphoprotein</keyword>
<keyword id="KW-0662">Pyridine nucleotide biosynthesis</keyword>
<keyword id="KW-1185">Reference proteome</keyword>
<proteinExistence type="inferred from homology"/>
<organism>
    <name type="scientific">Cupriavidus necator (strain ATCC 17699 / DSM 428 / KCTC 22496 / NCIMB 10442 / H16 / Stanier 337)</name>
    <name type="common">Ralstonia eutropha</name>
    <dbReference type="NCBI Taxonomy" id="381666"/>
    <lineage>
        <taxon>Bacteria</taxon>
        <taxon>Pseudomonadati</taxon>
        <taxon>Pseudomonadota</taxon>
        <taxon>Betaproteobacteria</taxon>
        <taxon>Burkholderiales</taxon>
        <taxon>Burkholderiaceae</taxon>
        <taxon>Cupriavidus</taxon>
    </lineage>
</organism>
<reference key="1">
    <citation type="journal article" date="2006" name="Nat. Biotechnol.">
        <title>Genome sequence of the bioplastic-producing 'Knallgas' bacterium Ralstonia eutropha H16.</title>
        <authorList>
            <person name="Pohlmann A."/>
            <person name="Fricke W.F."/>
            <person name="Reinecke F."/>
            <person name="Kusian B."/>
            <person name="Liesegang H."/>
            <person name="Cramm R."/>
            <person name="Eitinger T."/>
            <person name="Ewering C."/>
            <person name="Poetter M."/>
            <person name="Schwartz E."/>
            <person name="Strittmatter A."/>
            <person name="Voss I."/>
            <person name="Gottschalk G."/>
            <person name="Steinbuechel A."/>
            <person name="Friedrich B."/>
            <person name="Bowien B."/>
        </authorList>
    </citation>
    <scope>NUCLEOTIDE SEQUENCE [LARGE SCALE GENOMIC DNA]</scope>
    <source>
        <strain>ATCC 17699 / DSM 428 / KCTC 22496 / NCIMB 10442 / H16 / Stanier 337</strain>
    </source>
</reference>
<name>PNCB_CUPNH</name>
<comment type="function">
    <text evidence="1">Catalyzes the synthesis of beta-nicotinate D-ribonucleotide from nicotinate and 5-phospho-D-ribose 1-phosphate at the expense of ATP.</text>
</comment>
<comment type="catalytic activity">
    <reaction evidence="1">
        <text>nicotinate + 5-phospho-alpha-D-ribose 1-diphosphate + ATP + H2O = nicotinate beta-D-ribonucleotide + ADP + phosphate + diphosphate</text>
        <dbReference type="Rhea" id="RHEA:36163"/>
        <dbReference type="ChEBI" id="CHEBI:15377"/>
        <dbReference type="ChEBI" id="CHEBI:30616"/>
        <dbReference type="ChEBI" id="CHEBI:32544"/>
        <dbReference type="ChEBI" id="CHEBI:33019"/>
        <dbReference type="ChEBI" id="CHEBI:43474"/>
        <dbReference type="ChEBI" id="CHEBI:57502"/>
        <dbReference type="ChEBI" id="CHEBI:58017"/>
        <dbReference type="ChEBI" id="CHEBI:456216"/>
        <dbReference type="EC" id="6.3.4.21"/>
    </reaction>
</comment>
<comment type="pathway">
    <text evidence="1">Cofactor biosynthesis; NAD(+) biosynthesis; nicotinate D-ribonucleotide from nicotinate: step 1/1.</text>
</comment>
<comment type="PTM">
    <text evidence="1">Transiently phosphorylated on a His residue during the reaction cycle. Phosphorylation strongly increases the affinity for substrates and increases the rate of nicotinate D-ribonucleotide production. Dephosphorylation regenerates the low-affinity form of the enzyme, leading to product release.</text>
</comment>
<comment type="similarity">
    <text evidence="1">Belongs to the NAPRTase family.</text>
</comment>
<accession>Q0K8J9</accession>
<sequence length="392" mass="45180">MIIPSLLDTDLYKFTMMQVVLHQFPQAQVEYRFKCRNAGVDLTPYIDEIRAEVAHLCQLRFTDDELAYLRGLRFIKSDFVDFLGLFHLNEKYVSVRPSPQGNGEIEISIIGPWLHTILFEVPVLAIVNEVYFRRTQPRPDLAEGRRRLDQKLALLKTPELADCVIADYGTRRRFSREWQEEVLLTMRRLLGPQLAGTSNVHFARLHNMVPLGTMAHEYLQACQALGPRLRDSQVYALERWAREYRGDLGIALSDTYGFDAFLRDFDLYFCKLFDGVRHDSGDPMLWGERMVAHYAANRVDPRTKTLIFSDSLDIPRVIELYERFHGRCRLAFGVGTNLTNDLGYTPLQIVIKMVRCNGQPVAKLSDTPEKTMCDDPGYLSYLRQVYSVQPAA</sequence>
<dbReference type="EC" id="6.3.4.21" evidence="1"/>
<dbReference type="EMBL" id="AM260479">
    <property type="protein sequence ID" value="CAJ93672.1"/>
    <property type="molecule type" value="Genomic_DNA"/>
</dbReference>
<dbReference type="RefSeq" id="WP_010814658.1">
    <property type="nucleotide sequence ID" value="NZ_CP039287.1"/>
</dbReference>
<dbReference type="SMR" id="Q0K8J9"/>
<dbReference type="STRING" id="381666.H16_A2589"/>
<dbReference type="KEGG" id="reh:H16_A2589"/>
<dbReference type="eggNOG" id="COG1488">
    <property type="taxonomic scope" value="Bacteria"/>
</dbReference>
<dbReference type="HOGENOM" id="CLU_030991_1_0_4"/>
<dbReference type="OrthoDB" id="9771406at2"/>
<dbReference type="UniPathway" id="UPA00253">
    <property type="reaction ID" value="UER00457"/>
</dbReference>
<dbReference type="Proteomes" id="UP000008210">
    <property type="component" value="Chromosome 1"/>
</dbReference>
<dbReference type="GO" id="GO:0005829">
    <property type="term" value="C:cytosol"/>
    <property type="evidence" value="ECO:0007669"/>
    <property type="project" value="TreeGrafter"/>
</dbReference>
<dbReference type="GO" id="GO:0004516">
    <property type="term" value="F:nicotinate phosphoribosyltransferase activity"/>
    <property type="evidence" value="ECO:0007669"/>
    <property type="project" value="UniProtKB-UniRule"/>
</dbReference>
<dbReference type="GO" id="GO:0034355">
    <property type="term" value="P:NAD biosynthetic process via the salvage pathway"/>
    <property type="evidence" value="ECO:0007669"/>
    <property type="project" value="TreeGrafter"/>
</dbReference>
<dbReference type="CDD" id="cd01401">
    <property type="entry name" value="PncB_like"/>
    <property type="match status" value="1"/>
</dbReference>
<dbReference type="Gene3D" id="3.20.140.10">
    <property type="entry name" value="nicotinate phosphoribosyltransferase"/>
    <property type="match status" value="1"/>
</dbReference>
<dbReference type="HAMAP" id="MF_00570">
    <property type="entry name" value="NAPRTase"/>
    <property type="match status" value="1"/>
</dbReference>
<dbReference type="InterPro" id="IPR041525">
    <property type="entry name" value="N/Namide_PRibTrfase"/>
</dbReference>
<dbReference type="InterPro" id="IPR040727">
    <property type="entry name" value="NAPRTase_N"/>
</dbReference>
<dbReference type="InterPro" id="IPR006406">
    <property type="entry name" value="Nic_PRibTrfase"/>
</dbReference>
<dbReference type="InterPro" id="IPR007229">
    <property type="entry name" value="Nic_PRibTrfase-Fam"/>
</dbReference>
<dbReference type="InterPro" id="IPR036068">
    <property type="entry name" value="Nicotinate_pribotase-like_C"/>
</dbReference>
<dbReference type="NCBIfam" id="TIGR01514">
    <property type="entry name" value="NAPRTase"/>
    <property type="match status" value="1"/>
</dbReference>
<dbReference type="NCBIfam" id="NF003704">
    <property type="entry name" value="PRK05321.1"/>
    <property type="match status" value="1"/>
</dbReference>
<dbReference type="PANTHER" id="PTHR11098">
    <property type="entry name" value="NICOTINATE PHOSPHORIBOSYLTRANSFERASE"/>
    <property type="match status" value="1"/>
</dbReference>
<dbReference type="PANTHER" id="PTHR11098:SF1">
    <property type="entry name" value="NICOTINATE PHOSPHORIBOSYLTRANSFERASE"/>
    <property type="match status" value="1"/>
</dbReference>
<dbReference type="Pfam" id="PF04095">
    <property type="entry name" value="NAPRTase"/>
    <property type="match status" value="1"/>
</dbReference>
<dbReference type="Pfam" id="PF17767">
    <property type="entry name" value="NAPRTase_N"/>
    <property type="match status" value="1"/>
</dbReference>
<dbReference type="PIRSF" id="PIRSF000484">
    <property type="entry name" value="NAPRT"/>
    <property type="match status" value="1"/>
</dbReference>
<dbReference type="SUPFAM" id="SSF51690">
    <property type="entry name" value="Nicotinate/Quinolinate PRTase C-terminal domain-like"/>
    <property type="match status" value="1"/>
</dbReference>
<dbReference type="SUPFAM" id="SSF54675">
    <property type="entry name" value="Nicotinate/Quinolinate PRTase N-terminal domain-like"/>
    <property type="match status" value="1"/>
</dbReference>